<keyword id="KW-0963">Cytoplasm</keyword>
<keyword id="KW-0968">Cytoplasmic vesicle</keyword>
<keyword id="KW-0256">Endoplasmic reticulum</keyword>
<keyword id="KW-0931">ER-Golgi transport</keyword>
<keyword id="KW-0333">Golgi apparatus</keyword>
<keyword id="KW-0472">Membrane</keyword>
<keyword id="KW-0479">Metal-binding</keyword>
<keyword id="KW-0653">Protein transport</keyword>
<keyword id="KW-1185">Reference proteome</keyword>
<keyword id="KW-0813">Transport</keyword>
<keyword id="KW-0862">Zinc</keyword>
<proteinExistence type="inferred from homology"/>
<dbReference type="EMBL" id="AE016818">
    <property type="protein sequence ID" value="AAS52412.1"/>
    <property type="molecule type" value="Genomic_DNA"/>
</dbReference>
<dbReference type="RefSeq" id="NP_984588.1">
    <property type="nucleotide sequence ID" value="NM_209941.1"/>
</dbReference>
<dbReference type="SMR" id="Q758M7"/>
<dbReference type="FunCoup" id="Q758M7">
    <property type="interactions" value="1095"/>
</dbReference>
<dbReference type="STRING" id="284811.Q758M7"/>
<dbReference type="EnsemblFungi" id="AAS52412">
    <property type="protein sequence ID" value="AAS52412"/>
    <property type="gene ID" value="AGOS_AEL272W"/>
</dbReference>
<dbReference type="GeneID" id="4620768"/>
<dbReference type="KEGG" id="ago:AGOS_AEL272W"/>
<dbReference type="eggNOG" id="KOG1986">
    <property type="taxonomic scope" value="Eukaryota"/>
</dbReference>
<dbReference type="HOGENOM" id="CLU_008658_3_0_1"/>
<dbReference type="InParanoid" id="Q758M7"/>
<dbReference type="OMA" id="FPPHYAE"/>
<dbReference type="OrthoDB" id="10256289at2759"/>
<dbReference type="Proteomes" id="UP000000591">
    <property type="component" value="Chromosome V"/>
</dbReference>
<dbReference type="GO" id="GO:0030127">
    <property type="term" value="C:COPII vesicle coat"/>
    <property type="evidence" value="ECO:0000318"/>
    <property type="project" value="GO_Central"/>
</dbReference>
<dbReference type="GO" id="GO:0070971">
    <property type="term" value="C:endoplasmic reticulum exit site"/>
    <property type="evidence" value="ECO:0000318"/>
    <property type="project" value="GO_Central"/>
</dbReference>
<dbReference type="GO" id="GO:0005789">
    <property type="term" value="C:endoplasmic reticulum membrane"/>
    <property type="evidence" value="ECO:0007669"/>
    <property type="project" value="UniProtKB-SubCell"/>
</dbReference>
<dbReference type="GO" id="GO:0000139">
    <property type="term" value="C:Golgi membrane"/>
    <property type="evidence" value="ECO:0007669"/>
    <property type="project" value="UniProtKB-SubCell"/>
</dbReference>
<dbReference type="GO" id="GO:0005096">
    <property type="term" value="F:GTPase activator activity"/>
    <property type="evidence" value="ECO:0000318"/>
    <property type="project" value="GO_Central"/>
</dbReference>
<dbReference type="GO" id="GO:0008270">
    <property type="term" value="F:zinc ion binding"/>
    <property type="evidence" value="ECO:0007669"/>
    <property type="project" value="InterPro"/>
</dbReference>
<dbReference type="GO" id="GO:0090110">
    <property type="term" value="P:COPII-coated vesicle cargo loading"/>
    <property type="evidence" value="ECO:0000318"/>
    <property type="project" value="GO_Central"/>
</dbReference>
<dbReference type="GO" id="GO:0006886">
    <property type="term" value="P:intracellular protein transport"/>
    <property type="evidence" value="ECO:0007669"/>
    <property type="project" value="EnsemblFungi"/>
</dbReference>
<dbReference type="GO" id="GO:1902953">
    <property type="term" value="P:positive regulation of ER to Golgi vesicle-mediated transport"/>
    <property type="evidence" value="ECO:0007669"/>
    <property type="project" value="EnsemblFungi"/>
</dbReference>
<dbReference type="GO" id="GO:0070863">
    <property type="term" value="P:positive regulation of protein exit from endoplasmic reticulum"/>
    <property type="evidence" value="ECO:0007669"/>
    <property type="project" value="EnsemblFungi"/>
</dbReference>
<dbReference type="GO" id="GO:0003400">
    <property type="term" value="P:regulation of COPII vesicle coating"/>
    <property type="evidence" value="ECO:0007669"/>
    <property type="project" value="EnsemblFungi"/>
</dbReference>
<dbReference type="GO" id="GO:0061709">
    <property type="term" value="P:reticulophagy"/>
    <property type="evidence" value="ECO:0007669"/>
    <property type="project" value="EnsemblFungi"/>
</dbReference>
<dbReference type="CDD" id="cd11287">
    <property type="entry name" value="Sec23_C"/>
    <property type="match status" value="1"/>
</dbReference>
<dbReference type="FunFam" id="1.20.120.730:FF:000001">
    <property type="entry name" value="Protein transport protein SEC23"/>
    <property type="match status" value="1"/>
</dbReference>
<dbReference type="FunFam" id="2.30.30.380:FF:000001">
    <property type="entry name" value="Protein transport protein SEC23"/>
    <property type="match status" value="1"/>
</dbReference>
<dbReference type="FunFam" id="3.40.20.10:FF:000006">
    <property type="entry name" value="Protein transport protein SEC23"/>
    <property type="match status" value="1"/>
</dbReference>
<dbReference type="FunFam" id="3.40.50.410:FF:000008">
    <property type="entry name" value="Protein transport protein SEC23"/>
    <property type="match status" value="1"/>
</dbReference>
<dbReference type="Gene3D" id="2.60.40.1670">
    <property type="entry name" value="beta-sandwich domain of Sec23/24"/>
    <property type="match status" value="1"/>
</dbReference>
<dbReference type="Gene3D" id="1.20.120.730">
    <property type="entry name" value="Sec23/Sec24 helical domain"/>
    <property type="match status" value="1"/>
</dbReference>
<dbReference type="Gene3D" id="3.40.20.10">
    <property type="entry name" value="Severin"/>
    <property type="match status" value="1"/>
</dbReference>
<dbReference type="Gene3D" id="3.40.50.410">
    <property type="entry name" value="von Willebrand factor, type A domain"/>
    <property type="match status" value="1"/>
</dbReference>
<dbReference type="Gene3D" id="2.30.30.380">
    <property type="entry name" value="Zn-finger domain of Sec23/24"/>
    <property type="match status" value="1"/>
</dbReference>
<dbReference type="InterPro" id="IPR029006">
    <property type="entry name" value="ADF-H/Gelsolin-like_dom_sf"/>
</dbReference>
<dbReference type="InterPro" id="IPR007123">
    <property type="entry name" value="Gelsolin-like_dom"/>
</dbReference>
<dbReference type="InterPro" id="IPR036180">
    <property type="entry name" value="Gelsolin-like_dom_sf"/>
</dbReference>
<dbReference type="InterPro" id="IPR037364">
    <property type="entry name" value="Sec23"/>
</dbReference>
<dbReference type="InterPro" id="IPR006900">
    <property type="entry name" value="Sec23/24_helical_dom"/>
</dbReference>
<dbReference type="InterPro" id="IPR036175">
    <property type="entry name" value="Sec23/24_helical_dom_sf"/>
</dbReference>
<dbReference type="InterPro" id="IPR006896">
    <property type="entry name" value="Sec23/24_trunk_dom"/>
</dbReference>
<dbReference type="InterPro" id="IPR012990">
    <property type="entry name" value="Sec23_24_beta_S"/>
</dbReference>
<dbReference type="InterPro" id="IPR037550">
    <property type="entry name" value="Sec23_C"/>
</dbReference>
<dbReference type="InterPro" id="IPR036465">
    <property type="entry name" value="vWFA_dom_sf"/>
</dbReference>
<dbReference type="InterPro" id="IPR006895">
    <property type="entry name" value="Znf_Sec23_Sec24"/>
</dbReference>
<dbReference type="InterPro" id="IPR036174">
    <property type="entry name" value="Znf_Sec23_Sec24_sf"/>
</dbReference>
<dbReference type="PANTHER" id="PTHR11141">
    <property type="entry name" value="PROTEIN TRANSPORT PROTEIN SEC23"/>
    <property type="match status" value="1"/>
</dbReference>
<dbReference type="PANTHER" id="PTHR11141:SF0">
    <property type="entry name" value="PROTEIN TRANSPORT PROTEIN SEC23"/>
    <property type="match status" value="1"/>
</dbReference>
<dbReference type="Pfam" id="PF00626">
    <property type="entry name" value="Gelsolin"/>
    <property type="match status" value="1"/>
</dbReference>
<dbReference type="Pfam" id="PF08033">
    <property type="entry name" value="Sec23_BS"/>
    <property type="match status" value="1"/>
</dbReference>
<dbReference type="Pfam" id="PF04815">
    <property type="entry name" value="Sec23_helical"/>
    <property type="match status" value="1"/>
</dbReference>
<dbReference type="Pfam" id="PF04811">
    <property type="entry name" value="Sec23_trunk"/>
    <property type="match status" value="1"/>
</dbReference>
<dbReference type="Pfam" id="PF04810">
    <property type="entry name" value="zf-Sec23_Sec24"/>
    <property type="match status" value="1"/>
</dbReference>
<dbReference type="SUPFAM" id="SSF81995">
    <property type="entry name" value="beta-sandwich domain of Sec23/24"/>
    <property type="match status" value="1"/>
</dbReference>
<dbReference type="SUPFAM" id="SSF82754">
    <property type="entry name" value="C-terminal, gelsolin-like domain of Sec23/24"/>
    <property type="match status" value="1"/>
</dbReference>
<dbReference type="SUPFAM" id="SSF81811">
    <property type="entry name" value="Helical domain of Sec23/24"/>
    <property type="match status" value="1"/>
</dbReference>
<dbReference type="SUPFAM" id="SSF53300">
    <property type="entry name" value="vWA-like"/>
    <property type="match status" value="1"/>
</dbReference>
<dbReference type="SUPFAM" id="SSF82919">
    <property type="entry name" value="Zn-finger domain of Sec23/24"/>
    <property type="match status" value="1"/>
</dbReference>
<evidence type="ECO:0000250" key="1"/>
<evidence type="ECO:0000305" key="2"/>
<sequence>MDFEQNEDINGVRFSWNVFPASRTDANKNVVPVGCLYTPLKEIEELAVVSYNPVVCGGPHCKAVLNPYCEIDVRSNVWACPLCGTRNHLPQHYANMSQEAMPAELNSTTVEYITNRPVQVAPIFFYVVDVTAEEENLQALKDSIITSLSLLPPNALVGLITYGNVVQLHDLSCTAIDKCNVFRGDREYQLQQLVEMLTGEKSGGNLSAGPQMKITPFSLNRFFLPLEHVEFKLTQLLENLRPDQWTIPPGHRPLRATGSALNIATLLLQGCYRHVAARICLFASGPGTVAPGMIVSSELKDPLRSHHDIDSDNAKHHKKACKFYNQLAERAAENGHTIDIFAGCYDQVGMSEMKKLTDSTGGVLLLTDAFSTAIFKQSFIRLFSKDEEGYLTMAFNASMCIKTSADLKLQGLIGHASPVNVDAQNVSDSEIGIGGTSTWKMASLSPHHSYAIFFEIANTAATASLMGDRPKLAYTQFITAYQHASGTNRVRVTTVANQMLPFGNPAIAASFDQEAAAVLMARVAVDKADSDDGADVIRWIDRTLIKLCQKYADYNKGDPRSFRLAPNFSLYPQFIYYLRRSQFLSVFNNSPDETAFYRHIFTREDTTNSLIMIQPTLTSFSMEEEPQPVLLDSVSVKPNTILLLDTFFYILIYHGEQIAQWRKAGYQDDPQYADFKSLLEEPKLEAAELLVDRFPLPRFIDTEAGGSQARFLLSKLNPSDSYQNQSAAGSTIVLTDDVSLQNFMIHLQDVCVNGQN</sequence>
<accession>Q758M7</accession>
<organism>
    <name type="scientific">Eremothecium gossypii (strain ATCC 10895 / CBS 109.51 / FGSC 9923 / NRRL Y-1056)</name>
    <name type="common">Yeast</name>
    <name type="synonym">Ashbya gossypii</name>
    <dbReference type="NCBI Taxonomy" id="284811"/>
    <lineage>
        <taxon>Eukaryota</taxon>
        <taxon>Fungi</taxon>
        <taxon>Dikarya</taxon>
        <taxon>Ascomycota</taxon>
        <taxon>Saccharomycotina</taxon>
        <taxon>Saccharomycetes</taxon>
        <taxon>Saccharomycetales</taxon>
        <taxon>Saccharomycetaceae</taxon>
        <taxon>Eremothecium</taxon>
    </lineage>
</organism>
<name>SEC23_EREGS</name>
<feature type="chain" id="PRO_0000295449" description="Protein transport protein SEC23">
    <location>
        <begin position="1"/>
        <end position="756"/>
    </location>
</feature>
<feature type="binding site" evidence="1">
    <location>
        <position position="56"/>
    </location>
    <ligand>
        <name>Zn(2+)</name>
        <dbReference type="ChEBI" id="CHEBI:29105"/>
    </ligand>
</feature>
<feature type="binding site" evidence="1">
    <location>
        <position position="61"/>
    </location>
    <ligand>
        <name>Zn(2+)</name>
        <dbReference type="ChEBI" id="CHEBI:29105"/>
    </ligand>
</feature>
<feature type="binding site" evidence="1">
    <location>
        <position position="80"/>
    </location>
    <ligand>
        <name>Zn(2+)</name>
        <dbReference type="ChEBI" id="CHEBI:29105"/>
    </ligand>
</feature>
<feature type="binding site" evidence="1">
    <location>
        <position position="83"/>
    </location>
    <ligand>
        <name>Zn(2+)</name>
        <dbReference type="ChEBI" id="CHEBI:29105"/>
    </ligand>
</feature>
<protein>
    <recommendedName>
        <fullName>Protein transport protein SEC23</fullName>
    </recommendedName>
</protein>
<reference key="1">
    <citation type="journal article" date="2004" name="Science">
        <title>The Ashbya gossypii genome as a tool for mapping the ancient Saccharomyces cerevisiae genome.</title>
        <authorList>
            <person name="Dietrich F.S."/>
            <person name="Voegeli S."/>
            <person name="Brachat S."/>
            <person name="Lerch A."/>
            <person name="Gates K."/>
            <person name="Steiner S."/>
            <person name="Mohr C."/>
            <person name="Poehlmann R."/>
            <person name="Luedi P."/>
            <person name="Choi S."/>
            <person name="Wing R.A."/>
            <person name="Flavier A."/>
            <person name="Gaffney T.D."/>
            <person name="Philippsen P."/>
        </authorList>
    </citation>
    <scope>NUCLEOTIDE SEQUENCE [LARGE SCALE GENOMIC DNA]</scope>
    <source>
        <strain>ATCC 10895 / CBS 109.51 / FGSC 9923 / NRRL Y-1056</strain>
    </source>
</reference>
<reference key="2">
    <citation type="journal article" date="2013" name="G3 (Bethesda)">
        <title>Genomes of Ashbya fungi isolated from insects reveal four mating-type loci, numerous translocations, lack of transposons, and distinct gene duplications.</title>
        <authorList>
            <person name="Dietrich F.S."/>
            <person name="Voegeli S."/>
            <person name="Kuo S."/>
            <person name="Philippsen P."/>
        </authorList>
    </citation>
    <scope>GENOME REANNOTATION</scope>
    <source>
        <strain>ATCC 10895 / CBS 109.51 / FGSC 9923 / NRRL Y-1056</strain>
    </source>
</reference>
<gene>
    <name type="primary">SEC23</name>
    <name type="ordered locus">AEL272W</name>
</gene>
<comment type="function">
    <text evidence="1">Component of the coat protein complex II (COPII) which promotes the formation of transport vesicles from the endoplasmic reticulum (ER). The coat has two main functions, the physical deformation of the endoplasmic reticulum membrane into vesicles and the selection of cargo molecules (By similarity).</text>
</comment>
<comment type="subunit">
    <text evidence="1">The COPII coat is composed of at least 5 proteins: the SEC23/24 complex, the SEC13/31 complex, and the protein SAR1.</text>
</comment>
<comment type="subcellular location">
    <subcellularLocation>
        <location evidence="1">Cytoplasm</location>
    </subcellularLocation>
    <subcellularLocation>
        <location evidence="1">Cytoplasmic vesicle</location>
        <location evidence="1">COPII-coated vesicle membrane</location>
        <topology evidence="1">Peripheral membrane protein</topology>
        <orientation evidence="1">Cytoplasmic side</orientation>
    </subcellularLocation>
    <subcellularLocation>
        <location evidence="1">Endoplasmic reticulum membrane</location>
        <topology evidence="1">Peripheral membrane protein</topology>
        <orientation evidence="1">Cytoplasmic side</orientation>
    </subcellularLocation>
    <subcellularLocation>
        <location evidence="1">Golgi apparatus membrane</location>
        <topology evidence="1">Peripheral membrane protein</topology>
        <orientation evidence="1">Cytoplasmic side</orientation>
    </subcellularLocation>
</comment>
<comment type="similarity">
    <text evidence="2">Belongs to the SEC23/SEC24 family. SEC23 subfamily.</text>
</comment>